<accession>Q833Y9</accession>
<feature type="chain" id="PRO_0000100454" description="Phosphoribosylformylglycinamidine synthase subunit PurL">
    <location>
        <begin position="1"/>
        <end position="739"/>
    </location>
</feature>
<feature type="active site" evidence="1">
    <location>
        <position position="52"/>
    </location>
</feature>
<feature type="active site" description="Proton acceptor" evidence="1">
    <location>
        <position position="98"/>
    </location>
</feature>
<feature type="binding site" evidence="1">
    <location>
        <position position="55"/>
    </location>
    <ligand>
        <name>ATP</name>
        <dbReference type="ChEBI" id="CHEBI:30616"/>
    </ligand>
</feature>
<feature type="binding site" evidence="1">
    <location>
        <position position="94"/>
    </location>
    <ligand>
        <name>ATP</name>
        <dbReference type="ChEBI" id="CHEBI:30616"/>
    </ligand>
</feature>
<feature type="binding site" evidence="1">
    <location>
        <position position="96"/>
    </location>
    <ligand>
        <name>Mg(2+)</name>
        <dbReference type="ChEBI" id="CHEBI:18420"/>
        <label>1</label>
    </ligand>
</feature>
<feature type="binding site" evidence="1">
    <location>
        <begin position="97"/>
        <end position="100"/>
    </location>
    <ligand>
        <name>substrate</name>
    </ligand>
</feature>
<feature type="binding site" evidence="1">
    <location>
        <position position="119"/>
    </location>
    <ligand>
        <name>substrate</name>
    </ligand>
</feature>
<feature type="binding site" evidence="1">
    <location>
        <position position="120"/>
    </location>
    <ligand>
        <name>Mg(2+)</name>
        <dbReference type="ChEBI" id="CHEBI:18420"/>
        <label>2</label>
    </ligand>
</feature>
<feature type="binding site" evidence="1">
    <location>
        <position position="243"/>
    </location>
    <ligand>
        <name>substrate</name>
    </ligand>
</feature>
<feature type="binding site" evidence="1">
    <location>
        <position position="273"/>
    </location>
    <ligand>
        <name>Mg(2+)</name>
        <dbReference type="ChEBI" id="CHEBI:18420"/>
        <label>2</label>
    </ligand>
</feature>
<feature type="binding site" evidence="1">
    <location>
        <begin position="317"/>
        <end position="319"/>
    </location>
    <ligand>
        <name>substrate</name>
    </ligand>
</feature>
<feature type="binding site" evidence="1">
    <location>
        <position position="500"/>
    </location>
    <ligand>
        <name>ATP</name>
        <dbReference type="ChEBI" id="CHEBI:30616"/>
    </ligand>
</feature>
<feature type="binding site" evidence="1">
    <location>
        <position position="537"/>
    </location>
    <ligand>
        <name>ATP</name>
        <dbReference type="ChEBI" id="CHEBI:30616"/>
    </ligand>
</feature>
<feature type="binding site" evidence="1">
    <location>
        <position position="538"/>
    </location>
    <ligand>
        <name>Mg(2+)</name>
        <dbReference type="ChEBI" id="CHEBI:18420"/>
        <label>1</label>
    </ligand>
</feature>
<feature type="binding site" evidence="1">
    <location>
        <position position="540"/>
    </location>
    <ligand>
        <name>substrate</name>
    </ligand>
</feature>
<evidence type="ECO:0000255" key="1">
    <source>
        <dbReference type="HAMAP-Rule" id="MF_00420"/>
    </source>
</evidence>
<proteinExistence type="inferred from homology"/>
<comment type="function">
    <text evidence="1">Part of the phosphoribosylformylglycinamidine synthase complex involved in the purines biosynthetic pathway. Catalyzes the ATP-dependent conversion of formylglycinamide ribonucleotide (FGAR) and glutamine to yield formylglycinamidine ribonucleotide (FGAM) and glutamate. The FGAM synthase complex is composed of three subunits. PurQ produces an ammonia molecule by converting glutamine to glutamate. PurL transfers the ammonia molecule to FGAR to form FGAM in an ATP-dependent manner. PurS interacts with PurQ and PurL and is thought to assist in the transfer of the ammonia molecule from PurQ to PurL.</text>
</comment>
<comment type="catalytic activity">
    <reaction evidence="1">
        <text>N(2)-formyl-N(1)-(5-phospho-beta-D-ribosyl)glycinamide + L-glutamine + ATP + H2O = 2-formamido-N(1)-(5-O-phospho-beta-D-ribosyl)acetamidine + L-glutamate + ADP + phosphate + H(+)</text>
        <dbReference type="Rhea" id="RHEA:17129"/>
        <dbReference type="ChEBI" id="CHEBI:15377"/>
        <dbReference type="ChEBI" id="CHEBI:15378"/>
        <dbReference type="ChEBI" id="CHEBI:29985"/>
        <dbReference type="ChEBI" id="CHEBI:30616"/>
        <dbReference type="ChEBI" id="CHEBI:43474"/>
        <dbReference type="ChEBI" id="CHEBI:58359"/>
        <dbReference type="ChEBI" id="CHEBI:147286"/>
        <dbReference type="ChEBI" id="CHEBI:147287"/>
        <dbReference type="ChEBI" id="CHEBI:456216"/>
        <dbReference type="EC" id="6.3.5.3"/>
    </reaction>
</comment>
<comment type="pathway">
    <text evidence="1">Purine metabolism; IMP biosynthesis via de novo pathway; 5-amino-1-(5-phospho-D-ribosyl)imidazole from N(2)-formyl-N(1)-(5-phospho-D-ribosyl)glycinamide: step 1/2.</text>
</comment>
<comment type="subunit">
    <text evidence="1">Monomer. Part of the FGAM synthase complex composed of 1 PurL, 1 PurQ and 2 PurS subunits.</text>
</comment>
<comment type="subcellular location">
    <subcellularLocation>
        <location evidence="1">Cytoplasm</location>
    </subcellularLocation>
</comment>
<comment type="similarity">
    <text evidence="1">Belongs to the FGAMS family.</text>
</comment>
<organism>
    <name type="scientific">Enterococcus faecalis (strain ATCC 700802 / V583)</name>
    <dbReference type="NCBI Taxonomy" id="226185"/>
    <lineage>
        <taxon>Bacteria</taxon>
        <taxon>Bacillati</taxon>
        <taxon>Bacillota</taxon>
        <taxon>Bacilli</taxon>
        <taxon>Lactobacillales</taxon>
        <taxon>Enterococcaceae</taxon>
        <taxon>Enterococcus</taxon>
    </lineage>
</organism>
<reference key="1">
    <citation type="journal article" date="2003" name="Science">
        <title>Role of mobile DNA in the evolution of vancomycin-resistant Enterococcus faecalis.</title>
        <authorList>
            <person name="Paulsen I.T."/>
            <person name="Banerjei L."/>
            <person name="Myers G.S.A."/>
            <person name="Nelson K.E."/>
            <person name="Seshadri R."/>
            <person name="Read T.D."/>
            <person name="Fouts D.E."/>
            <person name="Eisen J.A."/>
            <person name="Gill S.R."/>
            <person name="Heidelberg J.F."/>
            <person name="Tettelin H."/>
            <person name="Dodson R.J."/>
            <person name="Umayam L.A."/>
            <person name="Brinkac L.M."/>
            <person name="Beanan M.J."/>
            <person name="Daugherty S.C."/>
            <person name="DeBoy R.T."/>
            <person name="Durkin S.A."/>
            <person name="Kolonay J.F."/>
            <person name="Madupu R."/>
            <person name="Nelson W.C."/>
            <person name="Vamathevan J.J."/>
            <person name="Tran B."/>
            <person name="Upton J."/>
            <person name="Hansen T."/>
            <person name="Shetty J."/>
            <person name="Khouri H.M."/>
            <person name="Utterback T.R."/>
            <person name="Radune D."/>
            <person name="Ketchum K.A."/>
            <person name="Dougherty B.A."/>
            <person name="Fraser C.M."/>
        </authorList>
    </citation>
    <scope>NUCLEOTIDE SEQUENCE [LARGE SCALE GENOMIC DNA]</scope>
    <source>
        <strain>ATCC 700802 / V583</strain>
    </source>
</reference>
<sequence length="739" mass="80336">MMNEPTPKEIKETRLYAEWGLTDEEYHQIETILQREPNYTETGLFSVMWSEHCSYKNSKPVLKKFPTEGPQVLQGPGEGAGIVDIGDGLAVVFKAESHNHPSAVEPYEGAATGVGGIIRDIFSMGARPIALLDSLRFGELTDARTRYLFQEVVAGISGYGNCIGIPTVGGEIAFEPCYQGNPLVNAMCVGLIRHDEIQKGQAKGVGNSILYVGAKTGRDGIHGATFASEEFSEGEEQQRSAVQVGDPFMEKLLLEACLDLIKNHQDILIGIQDMGAAGLVSSSAEMASKAGSGLILELDKVPQRETQMSPYEMLLSESQERMLICVEKGAEQQVCELFQTYDLEAVAIGSVTDDGQYRVFHGGKIVADVPVDALAEEAPVYQKAYQEPERMRAFKKLAPFIPEITNSTELLKRLLQQPTIASKKSVYETYDSQVQTNTVVQPGSDAAVLRVRGTNKALAMTTDCNSRYLYLNPEIGGQIAVAEAARNIVASGAQPLAITDCLNYGSPDKPESFWELWTSADGIAAACRQLGTPVISGNVSLYNETDGQAIYPTPMIGMVGVIEDVSQITTQAFKQVDDLIYLIGETHADFNGSEIQKIQLGRIEGQLRSFDLKEEKANQELVLKAIQVGLVASAHDCAEGGVAVALAESAFANELGLQVTLPLKKEYLFAETQSRFILSVSPQHQEAFETLIGRKAQHIGKVTETGLVIHALDDVINCSTKEAKALWEDAIPCLMKQKA</sequence>
<name>PURL_ENTFA</name>
<dbReference type="EC" id="6.3.5.3" evidence="1"/>
<dbReference type="EMBL" id="AE016830">
    <property type="protein sequence ID" value="AAO81553.1"/>
    <property type="molecule type" value="Genomic_DNA"/>
</dbReference>
<dbReference type="RefSeq" id="NP_815483.1">
    <property type="nucleotide sequence ID" value="NC_004668.1"/>
</dbReference>
<dbReference type="RefSeq" id="WP_002369272.1">
    <property type="nucleotide sequence ID" value="NZ_KE136528.1"/>
</dbReference>
<dbReference type="SMR" id="Q833Y9"/>
<dbReference type="STRING" id="226185.EF_1782"/>
<dbReference type="EnsemblBacteria" id="AAO81553">
    <property type="protein sequence ID" value="AAO81553"/>
    <property type="gene ID" value="EF_1782"/>
</dbReference>
<dbReference type="KEGG" id="efa:EF1782"/>
<dbReference type="PATRIC" id="fig|226185.45.peg.1733"/>
<dbReference type="eggNOG" id="COG0046">
    <property type="taxonomic scope" value="Bacteria"/>
</dbReference>
<dbReference type="HOGENOM" id="CLU_003100_0_1_9"/>
<dbReference type="UniPathway" id="UPA00074">
    <property type="reaction ID" value="UER00128"/>
</dbReference>
<dbReference type="Proteomes" id="UP000001415">
    <property type="component" value="Chromosome"/>
</dbReference>
<dbReference type="GO" id="GO:0005737">
    <property type="term" value="C:cytoplasm"/>
    <property type="evidence" value="ECO:0007669"/>
    <property type="project" value="UniProtKB-SubCell"/>
</dbReference>
<dbReference type="GO" id="GO:0005524">
    <property type="term" value="F:ATP binding"/>
    <property type="evidence" value="ECO:0007669"/>
    <property type="project" value="UniProtKB-UniRule"/>
</dbReference>
<dbReference type="GO" id="GO:0000287">
    <property type="term" value="F:magnesium ion binding"/>
    <property type="evidence" value="ECO:0007669"/>
    <property type="project" value="UniProtKB-UniRule"/>
</dbReference>
<dbReference type="GO" id="GO:0004642">
    <property type="term" value="F:phosphoribosylformylglycinamidine synthase activity"/>
    <property type="evidence" value="ECO:0007669"/>
    <property type="project" value="UniProtKB-UniRule"/>
</dbReference>
<dbReference type="GO" id="GO:0006189">
    <property type="term" value="P:'de novo' IMP biosynthetic process"/>
    <property type="evidence" value="ECO:0007669"/>
    <property type="project" value="UniProtKB-UniRule"/>
</dbReference>
<dbReference type="CDD" id="cd02203">
    <property type="entry name" value="PurL_repeat1"/>
    <property type="match status" value="1"/>
</dbReference>
<dbReference type="CDD" id="cd02204">
    <property type="entry name" value="PurL_repeat2"/>
    <property type="match status" value="1"/>
</dbReference>
<dbReference type="FunFam" id="3.30.1330.10:FF:000004">
    <property type="entry name" value="Phosphoribosylformylglycinamidine synthase subunit PurL"/>
    <property type="match status" value="1"/>
</dbReference>
<dbReference type="FunFam" id="3.90.650.10:FF:000009">
    <property type="entry name" value="Phosphoribosylformylglycinamidine synthase subunit PurL"/>
    <property type="match status" value="1"/>
</dbReference>
<dbReference type="Gene3D" id="3.90.650.10">
    <property type="entry name" value="PurM-like C-terminal domain"/>
    <property type="match status" value="2"/>
</dbReference>
<dbReference type="Gene3D" id="3.30.1330.10">
    <property type="entry name" value="PurM-like, N-terminal domain"/>
    <property type="match status" value="2"/>
</dbReference>
<dbReference type="HAMAP" id="MF_00420">
    <property type="entry name" value="PurL_2"/>
    <property type="match status" value="1"/>
</dbReference>
<dbReference type="InterPro" id="IPR010074">
    <property type="entry name" value="PRibForGlyAmidine_synth_PurL"/>
</dbReference>
<dbReference type="InterPro" id="IPR041609">
    <property type="entry name" value="PurL_linker"/>
</dbReference>
<dbReference type="InterPro" id="IPR010918">
    <property type="entry name" value="PurM-like_C_dom"/>
</dbReference>
<dbReference type="InterPro" id="IPR036676">
    <property type="entry name" value="PurM-like_C_sf"/>
</dbReference>
<dbReference type="InterPro" id="IPR016188">
    <property type="entry name" value="PurM-like_N"/>
</dbReference>
<dbReference type="InterPro" id="IPR036921">
    <property type="entry name" value="PurM-like_N_sf"/>
</dbReference>
<dbReference type="NCBIfam" id="TIGR01736">
    <property type="entry name" value="FGAM_synth_II"/>
    <property type="match status" value="1"/>
</dbReference>
<dbReference type="NCBIfam" id="NF002290">
    <property type="entry name" value="PRK01213.1"/>
    <property type="match status" value="1"/>
</dbReference>
<dbReference type="PANTHER" id="PTHR43555">
    <property type="entry name" value="PHOSPHORIBOSYLFORMYLGLYCINAMIDINE SYNTHASE SUBUNIT PURL"/>
    <property type="match status" value="1"/>
</dbReference>
<dbReference type="PANTHER" id="PTHR43555:SF1">
    <property type="entry name" value="PHOSPHORIBOSYLFORMYLGLYCINAMIDINE SYNTHASE SUBUNIT PURL"/>
    <property type="match status" value="1"/>
</dbReference>
<dbReference type="Pfam" id="PF00586">
    <property type="entry name" value="AIRS"/>
    <property type="match status" value="2"/>
</dbReference>
<dbReference type="Pfam" id="PF02769">
    <property type="entry name" value="AIRS_C"/>
    <property type="match status" value="2"/>
</dbReference>
<dbReference type="Pfam" id="PF18072">
    <property type="entry name" value="FGAR-AT_linker"/>
    <property type="match status" value="1"/>
</dbReference>
<dbReference type="PIRSF" id="PIRSF001587">
    <property type="entry name" value="FGAM_synthase_II"/>
    <property type="match status" value="1"/>
</dbReference>
<dbReference type="SUPFAM" id="SSF56042">
    <property type="entry name" value="PurM C-terminal domain-like"/>
    <property type="match status" value="2"/>
</dbReference>
<dbReference type="SUPFAM" id="SSF55326">
    <property type="entry name" value="PurM N-terminal domain-like"/>
    <property type="match status" value="2"/>
</dbReference>
<gene>
    <name evidence="1" type="primary">purL</name>
    <name type="ordered locus">EF_1782</name>
</gene>
<keyword id="KW-0067">ATP-binding</keyword>
<keyword id="KW-0963">Cytoplasm</keyword>
<keyword id="KW-0436">Ligase</keyword>
<keyword id="KW-0460">Magnesium</keyword>
<keyword id="KW-0479">Metal-binding</keyword>
<keyword id="KW-0547">Nucleotide-binding</keyword>
<keyword id="KW-0658">Purine biosynthesis</keyword>
<keyword id="KW-1185">Reference proteome</keyword>
<protein>
    <recommendedName>
        <fullName evidence="1">Phosphoribosylformylglycinamidine synthase subunit PurL</fullName>
        <shortName evidence="1">FGAM synthase</shortName>
        <ecNumber evidence="1">6.3.5.3</ecNumber>
    </recommendedName>
    <alternativeName>
        <fullName evidence="1">Formylglycinamide ribonucleotide amidotransferase subunit II</fullName>
        <shortName evidence="1">FGAR amidotransferase II</shortName>
        <shortName evidence="1">FGAR-AT II</shortName>
    </alternativeName>
    <alternativeName>
        <fullName evidence="1">Glutamine amidotransferase PurL</fullName>
    </alternativeName>
    <alternativeName>
        <fullName evidence="1">Phosphoribosylformylglycinamidine synthase subunit II</fullName>
    </alternativeName>
</protein>